<name>MTNA_VITVI</name>
<organism>
    <name type="scientific">Vitis vinifera</name>
    <name type="common">Grape</name>
    <dbReference type="NCBI Taxonomy" id="29760"/>
    <lineage>
        <taxon>Eukaryota</taxon>
        <taxon>Viridiplantae</taxon>
        <taxon>Streptophyta</taxon>
        <taxon>Embryophyta</taxon>
        <taxon>Tracheophyta</taxon>
        <taxon>Spermatophyta</taxon>
        <taxon>Magnoliopsida</taxon>
        <taxon>eudicotyledons</taxon>
        <taxon>Gunneridae</taxon>
        <taxon>Pentapetalae</taxon>
        <taxon>rosids</taxon>
        <taxon>Vitales</taxon>
        <taxon>Vitaceae</taxon>
        <taxon>Viteae</taxon>
        <taxon>Vitis</taxon>
    </lineage>
</organism>
<feature type="chain" id="PRO_0000401997" description="Methylthioribose-1-phosphate isomerase">
    <location>
        <begin position="1"/>
        <end position="376"/>
    </location>
</feature>
<feature type="active site" description="Proton donor" evidence="1">
    <location>
        <position position="256"/>
    </location>
</feature>
<feature type="site" description="Transition state stabilizer" evidence="1">
    <location>
        <position position="176"/>
    </location>
</feature>
<proteinExistence type="evidence at transcript level"/>
<keyword id="KW-0028">Amino-acid biosynthesis</keyword>
<keyword id="KW-0963">Cytoplasm</keyword>
<keyword id="KW-0413">Isomerase</keyword>
<keyword id="KW-0486">Methionine biosynthesis</keyword>
<keyword id="KW-0539">Nucleus</keyword>
<keyword id="KW-1185">Reference proteome</keyword>
<protein>
    <recommendedName>
        <fullName evidence="1">Methylthioribose-1-phosphate isomerase</fullName>
        <shortName evidence="1">M1Pi</shortName>
        <shortName evidence="1">MTR-1-P isomerase</shortName>
        <ecNumber evidence="1">5.3.1.23</ecNumber>
    </recommendedName>
    <alternativeName>
        <fullName evidence="1">S-methyl-5-thioribose-1-phosphate isomerase</fullName>
    </alternativeName>
    <alternativeName>
        <fullName evidence="1">Translation initiation factor eIF-2B subunit alpha/beta/delta-like protein</fullName>
    </alternativeName>
</protein>
<reference key="1">
    <citation type="journal article" date="2007" name="Nature">
        <title>The grapevine genome sequence suggests ancestral hexaploidization in major angiosperm phyla.</title>
        <authorList>
            <person name="Jaillon O."/>
            <person name="Aury J.-M."/>
            <person name="Noel B."/>
            <person name="Policriti A."/>
            <person name="Clepet C."/>
            <person name="Casagrande A."/>
            <person name="Choisne N."/>
            <person name="Aubourg S."/>
            <person name="Vitulo N."/>
            <person name="Jubin C."/>
            <person name="Vezzi A."/>
            <person name="Legeai F."/>
            <person name="Hugueney P."/>
            <person name="Dasilva C."/>
            <person name="Horner D."/>
            <person name="Mica E."/>
            <person name="Jublot D."/>
            <person name="Poulain J."/>
            <person name="Bruyere C."/>
            <person name="Billault A."/>
            <person name="Segurens B."/>
            <person name="Gouyvenoux M."/>
            <person name="Ugarte E."/>
            <person name="Cattonaro F."/>
            <person name="Anthouard V."/>
            <person name="Vico V."/>
            <person name="Del Fabbro C."/>
            <person name="Alaux M."/>
            <person name="Di Gaspero G."/>
            <person name="Dumas V."/>
            <person name="Felice N."/>
            <person name="Paillard S."/>
            <person name="Juman I."/>
            <person name="Moroldo M."/>
            <person name="Scalabrin S."/>
            <person name="Canaguier A."/>
            <person name="Le Clainche I."/>
            <person name="Malacrida G."/>
            <person name="Durand E."/>
            <person name="Pesole G."/>
            <person name="Laucou V."/>
            <person name="Chatelet P."/>
            <person name="Merdinoglu D."/>
            <person name="Delledonne M."/>
            <person name="Pezzotti M."/>
            <person name="Lecharny A."/>
            <person name="Scarpelli C."/>
            <person name="Artiguenave F."/>
            <person name="Pe M.E."/>
            <person name="Valle G."/>
            <person name="Morgante M."/>
            <person name="Caboche M."/>
            <person name="Adam-Blondon A.-F."/>
            <person name="Weissenbach J."/>
            <person name="Quetier F."/>
            <person name="Wincker P."/>
        </authorList>
    </citation>
    <scope>NUCLEOTIDE SEQUENCE [LARGE SCALE GENOMIC DNA]</scope>
    <source>
        <strain>cv. Pinot noir / PN40024</strain>
    </source>
</reference>
<accession>D7TCD0</accession>
<accession>F6HGN7</accession>
<sequence>MADSNSKHQDSLQSICYKRGSLQLLDQRKLPLETVYLEIKGADDGWHAIRDMVVRGAPAIAIAAALSLAVEVSNLEDFIGTSDDAASFLNSKLDYLVTSRPTAVNLSDAVTKLKGVISNAAATAFEAMSVFQAFLEAAEDMLREDVAANRAIGLYGASFLQSHIKDSKNLSILTHCNTGSLATAGYGTALGVIRSVHAEGILLRAYCTETRPFNQGSRLTAFELVHDNIPATLIADSAAAALMQAGRVDAVIVGADRVAANGDTANKIGTYSLALSAKHHHIPFFVAAPLTSIDLTLSSGQEIVIEERSPKELLNSRGGLGEQVAASGICVWNPAFDVTPADLIAGIITEKGVITKTGDVFDIKDFIHNATSHCCK</sequence>
<evidence type="ECO:0000255" key="1">
    <source>
        <dbReference type="HAMAP-Rule" id="MF_03119"/>
    </source>
</evidence>
<gene>
    <name type="ordered locus">VIT_11s0016g00830</name>
</gene>
<comment type="function">
    <text evidence="1">Catalyzes the interconversion of methylthioribose-1-phosphate (MTR-1-P) into methylthioribulose-1-phosphate (MTRu-1-P).</text>
</comment>
<comment type="catalytic activity">
    <reaction evidence="1">
        <text>5-(methylsulfanyl)-alpha-D-ribose 1-phosphate = 5-(methylsulfanyl)-D-ribulose 1-phosphate</text>
        <dbReference type="Rhea" id="RHEA:19989"/>
        <dbReference type="ChEBI" id="CHEBI:58533"/>
        <dbReference type="ChEBI" id="CHEBI:58548"/>
        <dbReference type="EC" id="5.3.1.23"/>
    </reaction>
</comment>
<comment type="pathway">
    <text evidence="1">Amino-acid biosynthesis; L-methionine biosynthesis via salvage pathway; L-methionine from S-methyl-5-thio-alpha-D-ribose 1-phosphate: step 1/6.</text>
</comment>
<comment type="subcellular location">
    <subcellularLocation>
        <location evidence="1">Cytoplasm</location>
    </subcellularLocation>
    <subcellularLocation>
        <location evidence="1">Nucleus</location>
    </subcellularLocation>
</comment>
<comment type="similarity">
    <text evidence="1">Belongs to the eIF-2B alpha/beta/delta subunits family. MtnA subfamily.</text>
</comment>
<dbReference type="EC" id="5.3.1.23" evidence="1"/>
<dbReference type="EMBL" id="FN595756">
    <property type="protein sequence ID" value="CCB51385.1"/>
    <property type="molecule type" value="Genomic_DNA"/>
</dbReference>
<dbReference type="RefSeq" id="XP_002277806.1">
    <property type="nucleotide sequence ID" value="XM_002277770.4"/>
</dbReference>
<dbReference type="RefSeq" id="XP_010656105.1">
    <property type="nucleotide sequence ID" value="XM_010657803.2"/>
</dbReference>
<dbReference type="SMR" id="D7TCD0"/>
<dbReference type="FunCoup" id="D7TCD0">
    <property type="interactions" value="3112"/>
</dbReference>
<dbReference type="STRING" id="29760.D7TCD0"/>
<dbReference type="PaxDb" id="29760-VIT_11s0016g00830.t01"/>
<dbReference type="EnsemblPlants" id="Vitvi11g00063_t001">
    <property type="protein sequence ID" value="Vitvi11g00063_P001"/>
    <property type="gene ID" value="Vitvi11g00063"/>
</dbReference>
<dbReference type="EnsemblPlants" id="Vitvi11g00063_t002">
    <property type="protein sequence ID" value="Vitvi11g00063_P002"/>
    <property type="gene ID" value="Vitvi11g00063"/>
</dbReference>
<dbReference type="Gramene" id="Vitvi11g00063_t001">
    <property type="protein sequence ID" value="Vitvi11g00063_P001"/>
    <property type="gene ID" value="Vitvi11g00063"/>
</dbReference>
<dbReference type="Gramene" id="Vitvi11g00063_t002">
    <property type="protein sequence ID" value="Vitvi11g00063_P002"/>
    <property type="gene ID" value="Vitvi11g00063"/>
</dbReference>
<dbReference type="eggNOG" id="KOG1468">
    <property type="taxonomic scope" value="Eukaryota"/>
</dbReference>
<dbReference type="HOGENOM" id="CLU_016218_1_3_1"/>
<dbReference type="InParanoid" id="D7TCD0"/>
<dbReference type="OrthoDB" id="2461at2759"/>
<dbReference type="UniPathway" id="UPA00904">
    <property type="reaction ID" value="UER00874"/>
</dbReference>
<dbReference type="Proteomes" id="UP000009183">
    <property type="component" value="Chromosome 11"/>
</dbReference>
<dbReference type="ExpressionAtlas" id="D7TCD0">
    <property type="expression patterns" value="baseline and differential"/>
</dbReference>
<dbReference type="GO" id="GO:0005737">
    <property type="term" value="C:cytoplasm"/>
    <property type="evidence" value="ECO:0007669"/>
    <property type="project" value="UniProtKB-SubCell"/>
</dbReference>
<dbReference type="GO" id="GO:0005634">
    <property type="term" value="C:nucleus"/>
    <property type="evidence" value="ECO:0007669"/>
    <property type="project" value="UniProtKB-SubCell"/>
</dbReference>
<dbReference type="GO" id="GO:0046523">
    <property type="term" value="F:S-methyl-5-thioribose-1-phosphate isomerase activity"/>
    <property type="evidence" value="ECO:0000318"/>
    <property type="project" value="GO_Central"/>
</dbReference>
<dbReference type="GO" id="GO:0019509">
    <property type="term" value="P:L-methionine salvage from methylthioadenosine"/>
    <property type="evidence" value="ECO:0000318"/>
    <property type="project" value="GO_Central"/>
</dbReference>
<dbReference type="FunFam" id="1.20.120.420:FF:000002">
    <property type="entry name" value="Methylthioribose-1-phosphate isomerase"/>
    <property type="match status" value="1"/>
</dbReference>
<dbReference type="FunFam" id="3.40.50.10470:FF:000003">
    <property type="entry name" value="Methylthioribose-1-phosphate isomerase"/>
    <property type="match status" value="1"/>
</dbReference>
<dbReference type="Gene3D" id="1.20.120.420">
    <property type="entry name" value="translation initiation factor eif-2b, domain 1"/>
    <property type="match status" value="1"/>
</dbReference>
<dbReference type="Gene3D" id="3.40.50.10470">
    <property type="entry name" value="Translation initiation factor eif-2b, domain 2"/>
    <property type="match status" value="1"/>
</dbReference>
<dbReference type="HAMAP" id="MF_01678">
    <property type="entry name" value="Salvage_MtnA"/>
    <property type="match status" value="1"/>
</dbReference>
<dbReference type="InterPro" id="IPR000649">
    <property type="entry name" value="IF-2B-related"/>
</dbReference>
<dbReference type="InterPro" id="IPR005251">
    <property type="entry name" value="IF-M1Pi"/>
</dbReference>
<dbReference type="InterPro" id="IPR042529">
    <property type="entry name" value="IF_2B-like_C"/>
</dbReference>
<dbReference type="InterPro" id="IPR011559">
    <property type="entry name" value="Initiation_fac_2B_a/b/d"/>
</dbReference>
<dbReference type="InterPro" id="IPR027363">
    <property type="entry name" value="M1Pi_N"/>
</dbReference>
<dbReference type="InterPro" id="IPR037171">
    <property type="entry name" value="NagB/RpiA_transferase-like"/>
</dbReference>
<dbReference type="NCBIfam" id="TIGR00524">
    <property type="entry name" value="eIF-2B_rel"/>
    <property type="match status" value="1"/>
</dbReference>
<dbReference type="NCBIfam" id="NF004326">
    <property type="entry name" value="PRK05720.1"/>
    <property type="match status" value="1"/>
</dbReference>
<dbReference type="NCBIfam" id="TIGR00512">
    <property type="entry name" value="salvage_mtnA"/>
    <property type="match status" value="1"/>
</dbReference>
<dbReference type="PANTHER" id="PTHR43475">
    <property type="entry name" value="METHYLTHIORIBOSE-1-PHOSPHATE ISOMERASE"/>
    <property type="match status" value="1"/>
</dbReference>
<dbReference type="PANTHER" id="PTHR43475:SF1">
    <property type="entry name" value="METHYLTHIORIBOSE-1-PHOSPHATE ISOMERASE"/>
    <property type="match status" value="1"/>
</dbReference>
<dbReference type="Pfam" id="PF01008">
    <property type="entry name" value="IF-2B"/>
    <property type="match status" value="1"/>
</dbReference>
<dbReference type="SUPFAM" id="SSF100950">
    <property type="entry name" value="NagB/RpiA/CoA transferase-like"/>
    <property type="match status" value="1"/>
</dbReference>